<feature type="chain" id="PRO_0000362816" description="NAD(P)H-quinone oxidoreductase subunit 3, chloroplastic">
    <location>
        <begin position="1"/>
        <end position="120"/>
    </location>
</feature>
<feature type="transmembrane region" description="Helical" evidence="1">
    <location>
        <begin position="9"/>
        <end position="29"/>
    </location>
</feature>
<feature type="transmembrane region" description="Helical" evidence="1">
    <location>
        <begin position="64"/>
        <end position="84"/>
    </location>
</feature>
<feature type="transmembrane region" description="Helical" evidence="1">
    <location>
        <begin position="88"/>
        <end position="108"/>
    </location>
</feature>
<accession>A8SEA8</accession>
<sequence>MFLLHEYDIFWAFLIISSIIPILAFLISGVLAPLSEGPEKFSSYESGIEPMGDAWLQFRIRYYMFALVFVVFDVETVFLYPWAMSFDVLGVSVFIEALIFVLIPIVGLVYAWRKGALEWS</sequence>
<proteinExistence type="inferred from homology"/>
<protein>
    <recommendedName>
        <fullName evidence="1">NAD(P)H-quinone oxidoreductase subunit 3, chloroplastic</fullName>
        <ecNumber evidence="1">7.1.1.-</ecNumber>
    </recommendedName>
    <alternativeName>
        <fullName evidence="1">NAD(P)H dehydrogenase subunit 3</fullName>
    </alternativeName>
    <alternativeName>
        <fullName evidence="1">NADH-plastoquinone oxidoreductase subunit 3</fullName>
    </alternativeName>
</protein>
<reference key="1">
    <citation type="journal article" date="2007" name="Proc. Natl. Acad. Sci. U.S.A.">
        <title>Using plastid genome-scale data to resolve enigmatic relationships among basal angiosperms.</title>
        <authorList>
            <person name="Moore M.J."/>
            <person name="Bell C.D."/>
            <person name="Soltis P.S."/>
            <person name="Soltis D.E."/>
        </authorList>
    </citation>
    <scope>NUCLEOTIDE SEQUENCE [LARGE SCALE GENOMIC DNA]</scope>
</reference>
<evidence type="ECO:0000255" key="1">
    <source>
        <dbReference type="HAMAP-Rule" id="MF_01394"/>
    </source>
</evidence>
<geneLocation type="chloroplast"/>
<comment type="function">
    <text evidence="1">NDH shuttles electrons from NAD(P)H:plastoquinone, via FMN and iron-sulfur (Fe-S) centers, to quinones in the photosynthetic chain and possibly in a chloroplast respiratory chain. The immediate electron acceptor for the enzyme in this species is believed to be plastoquinone. Couples the redox reaction to proton translocation, and thus conserves the redox energy in a proton gradient.</text>
</comment>
<comment type="catalytic activity">
    <reaction evidence="1">
        <text>a plastoquinone + NADH + (n+1) H(+)(in) = a plastoquinol + NAD(+) + n H(+)(out)</text>
        <dbReference type="Rhea" id="RHEA:42608"/>
        <dbReference type="Rhea" id="RHEA-COMP:9561"/>
        <dbReference type="Rhea" id="RHEA-COMP:9562"/>
        <dbReference type="ChEBI" id="CHEBI:15378"/>
        <dbReference type="ChEBI" id="CHEBI:17757"/>
        <dbReference type="ChEBI" id="CHEBI:57540"/>
        <dbReference type="ChEBI" id="CHEBI:57945"/>
        <dbReference type="ChEBI" id="CHEBI:62192"/>
    </reaction>
</comment>
<comment type="catalytic activity">
    <reaction evidence="1">
        <text>a plastoquinone + NADPH + (n+1) H(+)(in) = a plastoquinol + NADP(+) + n H(+)(out)</text>
        <dbReference type="Rhea" id="RHEA:42612"/>
        <dbReference type="Rhea" id="RHEA-COMP:9561"/>
        <dbReference type="Rhea" id="RHEA-COMP:9562"/>
        <dbReference type="ChEBI" id="CHEBI:15378"/>
        <dbReference type="ChEBI" id="CHEBI:17757"/>
        <dbReference type="ChEBI" id="CHEBI:57783"/>
        <dbReference type="ChEBI" id="CHEBI:58349"/>
        <dbReference type="ChEBI" id="CHEBI:62192"/>
    </reaction>
</comment>
<comment type="subunit">
    <text evidence="1">NDH is composed of at least 16 different subunits, 5 of which are encoded in the nucleus.</text>
</comment>
<comment type="subcellular location">
    <subcellularLocation>
        <location evidence="1">Plastid</location>
        <location evidence="1">Chloroplast thylakoid membrane</location>
        <topology evidence="1">Multi-pass membrane protein</topology>
    </subcellularLocation>
</comment>
<comment type="similarity">
    <text evidence="1">Belongs to the complex I subunit 3 family.</text>
</comment>
<name>NU3C_CERDE</name>
<organism>
    <name type="scientific">Ceratophyllum demersum</name>
    <name type="common">Rigid hornwort</name>
    <name type="synonym">Coontail</name>
    <dbReference type="NCBI Taxonomy" id="4428"/>
    <lineage>
        <taxon>Eukaryota</taxon>
        <taxon>Viridiplantae</taxon>
        <taxon>Streptophyta</taxon>
        <taxon>Embryophyta</taxon>
        <taxon>Tracheophyta</taxon>
        <taxon>Spermatophyta</taxon>
        <taxon>Magnoliopsida</taxon>
        <taxon>Ceratophyllales</taxon>
        <taxon>Ceratophyllaceae</taxon>
        <taxon>Ceratophyllum</taxon>
    </lineage>
</organism>
<dbReference type="EC" id="7.1.1.-" evidence="1"/>
<dbReference type="EMBL" id="EF614270">
    <property type="protein sequence ID" value="ABQ81455.1"/>
    <property type="molecule type" value="Genomic_DNA"/>
</dbReference>
<dbReference type="RefSeq" id="YP_001542452.1">
    <property type="nucleotide sequence ID" value="NC_009962.1"/>
</dbReference>
<dbReference type="SMR" id="A8SEA8"/>
<dbReference type="GeneID" id="5729420"/>
<dbReference type="GO" id="GO:0009535">
    <property type="term" value="C:chloroplast thylakoid membrane"/>
    <property type="evidence" value="ECO:0007669"/>
    <property type="project" value="UniProtKB-SubCell"/>
</dbReference>
<dbReference type="GO" id="GO:0030964">
    <property type="term" value="C:NADH dehydrogenase complex"/>
    <property type="evidence" value="ECO:0007669"/>
    <property type="project" value="TreeGrafter"/>
</dbReference>
<dbReference type="GO" id="GO:0008137">
    <property type="term" value="F:NADH dehydrogenase (ubiquinone) activity"/>
    <property type="evidence" value="ECO:0007669"/>
    <property type="project" value="InterPro"/>
</dbReference>
<dbReference type="GO" id="GO:0048038">
    <property type="term" value="F:quinone binding"/>
    <property type="evidence" value="ECO:0007669"/>
    <property type="project" value="UniProtKB-KW"/>
</dbReference>
<dbReference type="GO" id="GO:0019684">
    <property type="term" value="P:photosynthesis, light reaction"/>
    <property type="evidence" value="ECO:0007669"/>
    <property type="project" value="UniProtKB-UniRule"/>
</dbReference>
<dbReference type="FunFam" id="1.20.58.1610:FF:000001">
    <property type="entry name" value="NAD(P)H-quinone oxidoreductase subunit 3, chloroplastic"/>
    <property type="match status" value="1"/>
</dbReference>
<dbReference type="Gene3D" id="1.20.58.1610">
    <property type="entry name" value="NADH:ubiquinone/plastoquinone oxidoreductase, chain 3"/>
    <property type="match status" value="1"/>
</dbReference>
<dbReference type="HAMAP" id="MF_01394">
    <property type="entry name" value="NDH1_NuoA"/>
    <property type="match status" value="1"/>
</dbReference>
<dbReference type="InterPro" id="IPR023043">
    <property type="entry name" value="NAD(P)H_OxRDtase_bac/plastid"/>
</dbReference>
<dbReference type="InterPro" id="IPR000440">
    <property type="entry name" value="NADH_UbQ/plastoQ_OxRdtase_su3"/>
</dbReference>
<dbReference type="InterPro" id="IPR038430">
    <property type="entry name" value="NDAH_ubi_oxred_su3_sf"/>
</dbReference>
<dbReference type="PANTHER" id="PTHR11058">
    <property type="entry name" value="NADH-UBIQUINONE OXIDOREDUCTASE CHAIN 3"/>
    <property type="match status" value="1"/>
</dbReference>
<dbReference type="PANTHER" id="PTHR11058:SF9">
    <property type="entry name" value="NADH-UBIQUINONE OXIDOREDUCTASE CHAIN 3"/>
    <property type="match status" value="1"/>
</dbReference>
<dbReference type="Pfam" id="PF00507">
    <property type="entry name" value="Oxidored_q4"/>
    <property type="match status" value="1"/>
</dbReference>
<keyword id="KW-0150">Chloroplast</keyword>
<keyword id="KW-0472">Membrane</keyword>
<keyword id="KW-0520">NAD</keyword>
<keyword id="KW-0521">NADP</keyword>
<keyword id="KW-0934">Plastid</keyword>
<keyword id="KW-0618">Plastoquinone</keyword>
<keyword id="KW-0874">Quinone</keyword>
<keyword id="KW-0793">Thylakoid</keyword>
<keyword id="KW-1278">Translocase</keyword>
<keyword id="KW-0812">Transmembrane</keyword>
<keyword id="KW-1133">Transmembrane helix</keyword>
<keyword id="KW-0813">Transport</keyword>
<gene>
    <name evidence="1" type="primary">ndhC</name>
</gene>